<gene>
    <name type="primary">AGPAT3</name>
    <name type="synonym">LPAAT3</name>
    <name type="ORF">UNQ759/PRO1490</name>
</gene>
<feature type="chain" id="PRO_0000208194" description="1-acyl-sn-glycerol-3-phosphate acyltransferase gamma">
    <location>
        <begin position="1"/>
        <end position="376"/>
    </location>
</feature>
<feature type="topological domain" description="Cytoplasmic" evidence="8">
    <location>
        <begin position="1"/>
        <end position="124"/>
    </location>
</feature>
<feature type="transmembrane region" description="Helical" evidence="2">
    <location>
        <begin position="125"/>
        <end position="145"/>
    </location>
</feature>
<feature type="topological domain" description="Lumenal" evidence="8">
    <location>
        <begin position="146"/>
        <end position="316"/>
    </location>
</feature>
<feature type="transmembrane region" description="Helical" evidence="2">
    <location>
        <begin position="317"/>
        <end position="339"/>
    </location>
</feature>
<feature type="topological domain" description="Cytoplasmic" evidence="8">
    <location>
        <begin position="340"/>
        <end position="376"/>
    </location>
</feature>
<feature type="short sequence motif" description="HXXXXD motif" evidence="1">
    <location>
        <begin position="96"/>
        <end position="101"/>
    </location>
</feature>
<feature type="splice variant" id="VSP_005072" description="In isoform 2." evidence="5">
    <location>
        <begin position="1"/>
        <end position="62"/>
    </location>
</feature>
<feature type="splice variant" id="VSP_013144" description="In isoform 3." evidence="6">
    <original>MGLLAFLKTQFVLHLLVGFVFVVSGLVINFVQLCTLALWPVSKQLYRRLNCRLAYSLWSQ</original>
    <variation>MQSGGSLPFCCYLPSVSSQLLLRESYCNFIKRTQCKSSKLMFSRDFLSGQKYCRCLLWALPDHPRRRGPTSANALPLSAE</variation>
    <location>
        <begin position="1"/>
        <end position="60"/>
    </location>
</feature>
<feature type="sequence conflict" description="In Ref. 7; CAD38635." evidence="7" ref="7">
    <original>T</original>
    <variation>P</variation>
    <location>
        <position position="74"/>
    </location>
</feature>
<feature type="sequence conflict" description="In Ref. 3; AAQ89067." evidence="7" ref="3">
    <original>VTEIEKGSSYGNQEFKKKE</original>
    <variation>ESLEPGRWRLQ</variation>
    <location>
        <begin position="358"/>
        <end position="376"/>
    </location>
</feature>
<proteinExistence type="evidence at protein level"/>
<organism>
    <name type="scientific">Homo sapiens</name>
    <name type="common">Human</name>
    <dbReference type="NCBI Taxonomy" id="9606"/>
    <lineage>
        <taxon>Eukaryota</taxon>
        <taxon>Metazoa</taxon>
        <taxon>Chordata</taxon>
        <taxon>Craniata</taxon>
        <taxon>Vertebrata</taxon>
        <taxon>Euteleostomi</taxon>
        <taxon>Mammalia</taxon>
        <taxon>Eutheria</taxon>
        <taxon>Euarchontoglires</taxon>
        <taxon>Primates</taxon>
        <taxon>Haplorrhini</taxon>
        <taxon>Catarrhini</taxon>
        <taxon>Hominidae</taxon>
        <taxon>Homo</taxon>
    </lineage>
</organism>
<protein>
    <recommendedName>
        <fullName>1-acyl-sn-glycerol-3-phosphate acyltransferase gamma</fullName>
        <ecNumber evidence="4">2.3.1.51</ecNumber>
    </recommendedName>
    <alternativeName>
        <fullName>1-acylglycerol-3-phosphate O-acyltransferase 3</fullName>
        <shortName>1-AGP acyltransferase 3</shortName>
        <shortName>1-AGPAT 3</shortName>
    </alternativeName>
    <alternativeName>
        <fullName>Lysophosphatidic acid acyltransferase gamma</fullName>
        <shortName>LPAAT-gamma</shortName>
    </alternativeName>
</protein>
<accession>Q9NRZ7</accession>
<accession>D3DSL2</accession>
<accession>Q3ZCU2</accession>
<accession>Q6UWP6</accession>
<accession>Q6ZUC6</accession>
<accession>Q8N3Q7</accession>
<accession>Q9NRZ6</accession>
<keyword id="KW-0012">Acyltransferase</keyword>
<keyword id="KW-0025">Alternative splicing</keyword>
<keyword id="KW-0256">Endoplasmic reticulum</keyword>
<keyword id="KW-0444">Lipid biosynthesis</keyword>
<keyword id="KW-0443">Lipid metabolism</keyword>
<keyword id="KW-0472">Membrane</keyword>
<keyword id="KW-0539">Nucleus</keyword>
<keyword id="KW-0594">Phospholipid biosynthesis</keyword>
<keyword id="KW-1208">Phospholipid metabolism</keyword>
<keyword id="KW-1267">Proteomics identification</keyword>
<keyword id="KW-1185">Reference proteome</keyword>
<keyword id="KW-0808">Transferase</keyword>
<keyword id="KW-0812">Transmembrane</keyword>
<keyword id="KW-1133">Transmembrane helix</keyword>
<comment type="function">
    <text evidence="1 4">Converts 1-acyl-sn-glycerol-3-phosphate (lysophosphatidic acid or LPA) into 1,2-diacyl-sn-glycerol-3-phosphate (phosphatidic acid or PA) by incorporating an acyl moiety at the sn-2 position of the glycerol backbone (PubMed:21173190). Acts on LPA containing saturated or unsaturated fatty acids C16:0-C20:4 at the sn-1 position using C18:1, C20:4 or C18:2-CoA as the acyl donor (PubMed:21173190). Also acts on lysophosphatidylcholine, lysophosphatidylinositol and lysophosphatidylserine using C18:1 or C20:4-CoA (PubMed:21173190). Has a preference for arachidonoyl-CoA as a donor (By similarity). Also has a modest lysophosphatidylinositol acyltransferase (LPIAT) activity, converts lysophosphatidylinositol (LPI) into phosphatidylinositol (By similarity).</text>
</comment>
<comment type="catalytic activity">
    <reaction evidence="4">
        <text>a 1-acyl-sn-glycero-3-phosphate + an acyl-CoA = a 1,2-diacyl-sn-glycero-3-phosphate + CoA</text>
        <dbReference type="Rhea" id="RHEA:19709"/>
        <dbReference type="ChEBI" id="CHEBI:57287"/>
        <dbReference type="ChEBI" id="CHEBI:57970"/>
        <dbReference type="ChEBI" id="CHEBI:58342"/>
        <dbReference type="ChEBI" id="CHEBI:58608"/>
        <dbReference type="EC" id="2.3.1.51"/>
    </reaction>
    <physiologicalReaction direction="left-to-right" evidence="9">
        <dbReference type="Rhea" id="RHEA:19710"/>
    </physiologicalReaction>
</comment>
<comment type="catalytic activity">
    <reaction evidence="4">
        <text>pentadecanoyl-CoA + 1-(9Z-octadecenoyl)-sn-glycero-3-phosphate = 1-(9Z)-octadecenoyl-2-pentadecanoyl-sn-glycero-3-phosphate + CoA</text>
        <dbReference type="Rhea" id="RHEA:37175"/>
        <dbReference type="ChEBI" id="CHEBI:57287"/>
        <dbReference type="ChEBI" id="CHEBI:74309"/>
        <dbReference type="ChEBI" id="CHEBI:74544"/>
        <dbReference type="ChEBI" id="CHEBI:74578"/>
    </reaction>
    <physiologicalReaction direction="left-to-right" evidence="9">
        <dbReference type="Rhea" id="RHEA:37176"/>
    </physiologicalReaction>
</comment>
<comment type="catalytic activity">
    <reaction evidence="4">
        <text>heptadecanoyl-CoA + 1-(9Z-octadecenoyl)-sn-glycero-3-phosphate = 1-(9Z)-octadecenoyl-2-heptadecanoyl-sn-glycero-3-phosphate + CoA</text>
        <dbReference type="Rhea" id="RHEA:37155"/>
        <dbReference type="ChEBI" id="CHEBI:57287"/>
        <dbReference type="ChEBI" id="CHEBI:74307"/>
        <dbReference type="ChEBI" id="CHEBI:74544"/>
        <dbReference type="ChEBI" id="CHEBI:74558"/>
    </reaction>
    <physiologicalReaction direction="left-to-right" evidence="9">
        <dbReference type="Rhea" id="RHEA:37156"/>
    </physiologicalReaction>
</comment>
<comment type="catalytic activity">
    <reaction evidence="4">
        <text>1-(9Z-octadecenoyl)-sn-glycero-3-phosphate + octadecanoyl-CoA = 1-(9Z-octadecenoyl)-2-octadecanoyl-sn-glycero-3-phosphate + CoA</text>
        <dbReference type="Rhea" id="RHEA:37147"/>
        <dbReference type="ChEBI" id="CHEBI:57287"/>
        <dbReference type="ChEBI" id="CHEBI:57394"/>
        <dbReference type="ChEBI" id="CHEBI:74544"/>
        <dbReference type="ChEBI" id="CHEBI:74552"/>
    </reaction>
    <physiologicalReaction direction="left-to-right" evidence="9">
        <dbReference type="Rhea" id="RHEA:37148"/>
    </physiologicalReaction>
</comment>
<comment type="catalytic activity">
    <reaction evidence="4">
        <text>nonadecanoyl-CoA + 1-(9Z-octadecenoyl)-sn-glycero-3-phosphate = 1-(9Z)-octadecenoyl-2-nonadecanoyl-sn-glycero-3-phosphate + CoA</text>
        <dbReference type="Rhea" id="RHEA:37595"/>
        <dbReference type="ChEBI" id="CHEBI:57287"/>
        <dbReference type="ChEBI" id="CHEBI:74544"/>
        <dbReference type="ChEBI" id="CHEBI:75104"/>
        <dbReference type="ChEBI" id="CHEBI:75105"/>
    </reaction>
    <physiologicalReaction direction="left-to-right" evidence="9">
        <dbReference type="Rhea" id="RHEA:37596"/>
    </physiologicalReaction>
</comment>
<comment type="catalytic activity">
    <reaction evidence="4">
        <text>1-(9Z-octadecenoyl)-sn-glycero-3-phosphate + (5Z,8Z,11Z,14Z)-eicosatetraenoyl-CoA = 1-(9Z)-octadecenoyl-2-(5Z,8Z,11Z,14Z)-eicosatetraenoyl-sn-glycero-3-phosphate + CoA</text>
        <dbReference type="Rhea" id="RHEA:37443"/>
        <dbReference type="ChEBI" id="CHEBI:57287"/>
        <dbReference type="ChEBI" id="CHEBI:57368"/>
        <dbReference type="ChEBI" id="CHEBI:74544"/>
        <dbReference type="ChEBI" id="CHEBI:74928"/>
    </reaction>
    <physiologicalReaction direction="left-to-right" evidence="9">
        <dbReference type="Rhea" id="RHEA:37444"/>
    </physiologicalReaction>
</comment>
<comment type="catalytic activity">
    <reaction evidence="4">
        <text>1-(9Z-octadecenoyl)-sn-glycero-3-phosphate + (9Z)-octadecenoyl-CoA = 1,2-di-(9Z-octadecenoyl)-sn-glycero-3-phosphate + CoA</text>
        <dbReference type="Rhea" id="RHEA:37131"/>
        <dbReference type="ChEBI" id="CHEBI:57287"/>
        <dbReference type="ChEBI" id="CHEBI:57387"/>
        <dbReference type="ChEBI" id="CHEBI:74544"/>
        <dbReference type="ChEBI" id="CHEBI:74546"/>
    </reaction>
    <physiologicalReaction direction="left-to-right" evidence="9">
        <dbReference type="Rhea" id="RHEA:37132"/>
    </physiologicalReaction>
</comment>
<comment type="catalytic activity">
    <reaction evidence="4">
        <text>1-(9Z-octadecenoyl)-sn-glycero-3-phosphate + (9Z,12Z)-octadecadienoyl-CoA = 1-(9Z)-octadecenoyl-2-(9Z,12Z)-octadecadienoyl-sn-glycero-3-phosphate + CoA</text>
        <dbReference type="Rhea" id="RHEA:37159"/>
        <dbReference type="ChEBI" id="CHEBI:57287"/>
        <dbReference type="ChEBI" id="CHEBI:57383"/>
        <dbReference type="ChEBI" id="CHEBI:74544"/>
        <dbReference type="ChEBI" id="CHEBI:74563"/>
    </reaction>
    <physiologicalReaction direction="left-to-right" evidence="9">
        <dbReference type="Rhea" id="RHEA:37160"/>
    </physiologicalReaction>
</comment>
<comment type="catalytic activity">
    <reaction evidence="4">
        <text>1-(9Z-octadecenoyl)-sn-glycero-3-phosphocholine + (5Z,8Z,11Z,14Z)-eicosatetraenoyl-CoA = 1-(9Z)-octadecenoyl-2-(5Z,8Z,11Z,14Z)-icosatetraenoyl-sn-glycero-3-phosphocholine + CoA</text>
        <dbReference type="Rhea" id="RHEA:37395"/>
        <dbReference type="ChEBI" id="CHEBI:28610"/>
        <dbReference type="ChEBI" id="CHEBI:57287"/>
        <dbReference type="ChEBI" id="CHEBI:57368"/>
        <dbReference type="ChEBI" id="CHEBI:74671"/>
    </reaction>
    <physiologicalReaction direction="left-to-right" evidence="9">
        <dbReference type="Rhea" id="RHEA:37396"/>
    </physiologicalReaction>
</comment>
<comment type="catalytic activity">
    <reaction evidence="4">
        <text>1-(9Z-octadecenoyl)-sn-glycero-3-phospho-(1D-myo-inositol) + (5Z,8Z,11Z,14Z)-eicosatetraenoyl-CoA = 1-(9Z-octadecenoyl)-2-(5Z,8Z,11Z,14Z-eicosatetraenoyl)-sn-glycero-3-phospho-1D-myo-inositol + CoA</text>
        <dbReference type="Rhea" id="RHEA:42216"/>
        <dbReference type="ChEBI" id="CHEBI:57287"/>
        <dbReference type="ChEBI" id="CHEBI:57368"/>
        <dbReference type="ChEBI" id="CHEBI:78762"/>
        <dbReference type="ChEBI" id="CHEBI:78765"/>
    </reaction>
    <physiologicalReaction direction="left-to-right" evidence="9">
        <dbReference type="Rhea" id="RHEA:42217"/>
    </physiologicalReaction>
</comment>
<comment type="catalytic activity">
    <reaction evidence="4">
        <text>1-(9Z-octadecenoyl)-sn-glycero-3-phospho-L-serine + (5Z,8Z,11Z,14Z)-eicosatetraenoyl-CoA = 1-(9Z-octadecenoyl)-2-(5Z,8Z,11Z,14Z-eicosatetraenoyl)-sn-glycero-3-phospho-L-serine + CoA</text>
        <dbReference type="Rhea" id="RHEA:37379"/>
        <dbReference type="ChEBI" id="CHEBI:57287"/>
        <dbReference type="ChEBI" id="CHEBI:57368"/>
        <dbReference type="ChEBI" id="CHEBI:74617"/>
        <dbReference type="ChEBI" id="CHEBI:74897"/>
    </reaction>
    <physiologicalReaction direction="left-to-right" evidence="9">
        <dbReference type="Rhea" id="RHEA:37380"/>
    </physiologicalReaction>
</comment>
<comment type="catalytic activity">
    <reaction evidence="4">
        <text>1-hexadecanoyl-sn-glycero-3-phosphate + (9Z)-octadecenoyl-CoA = 1-hexadecanoyl-2-(9Z-octadecenoyl)-sn-glycero-3-phosphate + CoA</text>
        <dbReference type="Rhea" id="RHEA:33187"/>
        <dbReference type="ChEBI" id="CHEBI:57287"/>
        <dbReference type="ChEBI" id="CHEBI:57387"/>
        <dbReference type="ChEBI" id="CHEBI:57518"/>
        <dbReference type="ChEBI" id="CHEBI:64839"/>
    </reaction>
    <physiologicalReaction direction="left-to-right" evidence="9">
        <dbReference type="Rhea" id="RHEA:33188"/>
    </physiologicalReaction>
</comment>
<comment type="catalytic activity">
    <reaction evidence="4">
        <text>1-hexadecanoyl-sn-glycero-3-phosphate + (5Z,8Z,11Z,14Z)-eicosatetraenoyl-CoA = 1-hexadecanoyl-2-(5Z,8Z,11Z,14Z-eicosatetraenoyl)-sn-glycero-3-phosphate + CoA</text>
        <dbReference type="Rhea" id="RHEA:35915"/>
        <dbReference type="ChEBI" id="CHEBI:57287"/>
        <dbReference type="ChEBI" id="CHEBI:57368"/>
        <dbReference type="ChEBI" id="CHEBI:57518"/>
        <dbReference type="ChEBI" id="CHEBI:72864"/>
    </reaction>
    <physiologicalReaction direction="left-to-right" evidence="9">
        <dbReference type="Rhea" id="RHEA:35916"/>
    </physiologicalReaction>
</comment>
<comment type="catalytic activity">
    <reaction evidence="4">
        <text>1-heptadecanoyl-sn-glycero-3-phosphate + (5Z,8Z,11Z,14Z)-eicosatetraenoyl-CoA = 1-heptadecanoyl-2-(5Z,8Z,11Z,14Z)-eicosatetraenoyl-sn-glycero-3-phosphate + CoA</text>
        <dbReference type="Rhea" id="RHEA:42220"/>
        <dbReference type="ChEBI" id="CHEBI:57287"/>
        <dbReference type="ChEBI" id="CHEBI:57368"/>
        <dbReference type="ChEBI" id="CHEBI:74554"/>
        <dbReference type="ChEBI" id="CHEBI:78768"/>
    </reaction>
    <physiologicalReaction direction="left-to-right" evidence="9">
        <dbReference type="Rhea" id="RHEA:42221"/>
    </physiologicalReaction>
</comment>
<comment type="catalytic activity">
    <reaction evidence="4">
        <text>1-octadecanoyl-sn-glycero-3-phosphate + (9Z)-octadecenoyl-CoA = 1-octadecanoyl-2-(9Z-octadecenoyl)-sn-glycero-3-phosphate + CoA</text>
        <dbReference type="Rhea" id="RHEA:37163"/>
        <dbReference type="ChEBI" id="CHEBI:57287"/>
        <dbReference type="ChEBI" id="CHEBI:57387"/>
        <dbReference type="ChEBI" id="CHEBI:74560"/>
        <dbReference type="ChEBI" id="CHEBI:74565"/>
    </reaction>
    <physiologicalReaction direction="left-to-right" evidence="9">
        <dbReference type="Rhea" id="RHEA:37164"/>
    </physiologicalReaction>
</comment>
<comment type="catalytic activity">
    <reaction evidence="4">
        <text>1-octadecanoyl-sn-glycero-3-phosphate + (5Z,8Z,11Z,14Z)-eicosatetraenoyl-CoA = 1-octadecanoyl-2-(5Z,8Z,11Z,14Z-eicosatetraenoyl)-sn-glycero-3-phosphate + CoA</text>
        <dbReference type="Rhea" id="RHEA:42588"/>
        <dbReference type="ChEBI" id="CHEBI:57287"/>
        <dbReference type="ChEBI" id="CHEBI:57368"/>
        <dbReference type="ChEBI" id="CHEBI:74565"/>
        <dbReference type="ChEBI" id="CHEBI:77091"/>
    </reaction>
    <physiologicalReaction direction="left-to-right" evidence="9">
        <dbReference type="Rhea" id="RHEA:42589"/>
    </physiologicalReaction>
</comment>
<comment type="catalytic activity">
    <reaction evidence="4">
        <text>1-(9Z-octadecenoyl)-sn-glycero-3-phosphate + hexadecanoyl-CoA = 1-hexadecanoyl-2-(9Z-octadecenoyl)-sn-glycero-3-phosphate + CoA</text>
        <dbReference type="Rhea" id="RHEA:42592"/>
        <dbReference type="ChEBI" id="CHEBI:57287"/>
        <dbReference type="ChEBI" id="CHEBI:57379"/>
        <dbReference type="ChEBI" id="CHEBI:64839"/>
        <dbReference type="ChEBI" id="CHEBI:74544"/>
    </reaction>
    <physiologicalReaction direction="left-to-right" evidence="9">
        <dbReference type="Rhea" id="RHEA:42593"/>
    </physiologicalReaction>
</comment>
<comment type="catalytic activity">
    <reaction evidence="1">
        <text>1-O-(9Z-octadecenyl)-sn-glycero-3-phosphate + (5Z,8Z,11Z,14Z)-eicosatetraenoyl-CoA = 1-O-(9Z-octadecenyl)-2-(5Z,8Z,11Z,14Z-eicosatetraenoyl)-sn-glycero-3-phosphate + CoA</text>
        <dbReference type="Rhea" id="RHEA:45404"/>
        <dbReference type="ChEBI" id="CHEBI:57287"/>
        <dbReference type="ChEBI" id="CHEBI:57368"/>
        <dbReference type="ChEBI" id="CHEBI:78402"/>
        <dbReference type="ChEBI" id="CHEBI:85231"/>
    </reaction>
    <physiologicalReaction direction="left-to-right" evidence="1">
        <dbReference type="Rhea" id="RHEA:45405"/>
    </physiologicalReaction>
</comment>
<comment type="catalytic activity">
    <reaction evidence="1">
        <text>a 1-acyl-sn-glycero-3-phospho-(1D-myo-inositol) + (5Z,8Z,11Z,14Z)-eicosatetraenoyl-CoA = a 1-acyl-2-(5Z,8Z,11Z,14Z-eicosatetraenoyl)-sn-glycero-3-phospho-(1D-myo-inositol) + CoA</text>
        <dbReference type="Rhea" id="RHEA:37015"/>
        <dbReference type="ChEBI" id="CHEBI:57287"/>
        <dbReference type="ChEBI" id="CHEBI:57368"/>
        <dbReference type="ChEBI" id="CHEBI:64771"/>
        <dbReference type="ChEBI" id="CHEBI:75243"/>
    </reaction>
    <physiologicalReaction direction="left-to-right" evidence="1">
        <dbReference type="Rhea" id="RHEA:37016"/>
    </physiologicalReaction>
</comment>
<comment type="biophysicochemical properties">
    <kinetics>
        <KM evidence="4">4.78 uM for LPA sn-1 C18:1</KM>
        <KM evidence="4">21.53 uM for C18:1-CoA</KM>
        <Vmax evidence="4">6.35 nmol/min/mg enzyme toward LPA sn-1 C18:1</Vmax>
        <Vmax evidence="4">0.74 nmol/min/mg enzyme toward C18:1-CoA</Vmax>
    </kinetics>
</comment>
<comment type="pathway">
    <text>Phospholipid metabolism; CDP-diacylglycerol biosynthesis; CDP-diacylglycerol from sn-glycerol 3-phosphate: step 2/3.</text>
</comment>
<comment type="interaction">
    <interactant intactId="EBI-2803601">
        <id>Q9NRZ7</id>
    </interactant>
    <interactant intactId="EBI-348517">
        <id>O95870</id>
        <label>ABHD16A</label>
    </interactant>
    <organismsDiffer>false</organismsDiffer>
    <experiments>3</experiments>
</comment>
<comment type="interaction">
    <interactant intactId="EBI-2803601">
        <id>Q9NRZ7</id>
    </interactant>
    <interactant intactId="EBI-13059134">
        <id>Q13520</id>
        <label>AQP6</label>
    </interactant>
    <organismsDiffer>false</organismsDiffer>
    <experiments>3</experiments>
</comment>
<comment type="interaction">
    <interactant intactId="EBI-2803601">
        <id>Q9NRZ7</id>
    </interactant>
    <interactant intactId="EBI-752094">
        <id>Q12982</id>
        <label>BNIP2</label>
    </interactant>
    <organismsDiffer>false</organismsDiffer>
    <experiments>3</experiments>
</comment>
<comment type="interaction">
    <interactant intactId="EBI-2803601">
        <id>Q9NRZ7</id>
    </interactant>
    <interactant intactId="EBI-6942903">
        <id>Q96BA8</id>
        <label>CREB3L1</label>
    </interactant>
    <organismsDiffer>false</organismsDiffer>
    <experiments>3</experiments>
</comment>
<comment type="interaction">
    <interactant intactId="EBI-2803601">
        <id>Q9NRZ7</id>
    </interactant>
    <interactant intactId="EBI-10268158">
        <id>Q8N9E0</id>
        <label>FAM133A</label>
    </interactant>
    <organismsDiffer>false</organismsDiffer>
    <experiments>3</experiments>
</comment>
<comment type="interaction">
    <interactant intactId="EBI-2803601">
        <id>Q9NRZ7</id>
    </interactant>
    <interactant intactId="EBI-17231387">
        <id>Q6ZVE7</id>
        <label>GOLT1A</label>
    </interactant>
    <organismsDiffer>false</organismsDiffer>
    <experiments>3</experiments>
</comment>
<comment type="interaction">
    <interactant intactId="EBI-2803601">
        <id>Q9NRZ7</id>
    </interactant>
    <interactant intactId="EBI-1052304">
        <id>Q8NBQ5</id>
        <label>HSD17B11</label>
    </interactant>
    <organismsDiffer>false</organismsDiffer>
    <experiments>3</experiments>
</comment>
<comment type="interaction">
    <interactant intactId="EBI-2803601">
        <id>Q9NRZ7</id>
    </interactant>
    <interactant intactId="EBI-18053395">
        <id>Q7Z5P4</id>
        <label>HSD17B13</label>
    </interactant>
    <organismsDiffer>false</organismsDiffer>
    <experiments>3</experiments>
</comment>
<comment type="interaction">
    <interactant intactId="EBI-2803601">
        <id>Q9NRZ7</id>
    </interactant>
    <interactant intactId="EBI-373355">
        <id>Q5SR56</id>
        <label>MFSD14B</label>
    </interactant>
    <organismsDiffer>false</organismsDiffer>
    <experiments>3</experiments>
</comment>
<comment type="interaction">
    <interactant intactId="EBI-2803601">
        <id>Q9NRZ7</id>
    </interactant>
    <interactant intactId="EBI-711788">
        <id>Q00013</id>
        <label>MPP1</label>
    </interactant>
    <organismsDiffer>false</organismsDiffer>
    <experiments>3</experiments>
</comment>
<comment type="interaction">
    <interactant intactId="EBI-2803601">
        <id>Q9NRZ7</id>
    </interactant>
    <interactant intactId="EBI-3920396">
        <id>Q6ZUT1</id>
        <label>NKAPD1</label>
    </interactant>
    <organismsDiffer>false</organismsDiffer>
    <experiments>3</experiments>
</comment>
<comment type="interaction">
    <interactant intactId="EBI-2803601">
        <id>Q9NRZ7</id>
    </interactant>
    <interactant intactId="EBI-3923031">
        <id>Q14973</id>
        <label>SLC10A1</label>
    </interactant>
    <organismsDiffer>false</organismsDiffer>
    <experiments>3</experiments>
</comment>
<comment type="interaction">
    <interactant intactId="EBI-2803601">
        <id>Q9NRZ7</id>
    </interactant>
    <interactant intactId="EBI-17295964">
        <id>Q9NQQ7-3</id>
        <label>SLC35C2</label>
    </interactant>
    <organismsDiffer>false</organismsDiffer>
    <experiments>3</experiments>
</comment>
<comment type="interaction">
    <interactant intactId="EBI-2803601">
        <id>Q9NRZ7</id>
    </interactant>
    <interactant intactId="EBI-10268630">
        <id>Q8N9Q2</id>
        <label>SREK1IP1</label>
    </interactant>
    <organismsDiffer>false</organismsDiffer>
    <experiments>3</experiments>
</comment>
<comment type="interaction">
    <interactant intactId="EBI-2803601">
        <id>Q9NRZ7</id>
    </interactant>
    <interactant intactId="EBI-8638294">
        <id>Q9NUH8</id>
        <label>TMEM14B</label>
    </interactant>
    <organismsDiffer>false</organismsDiffer>
    <experiments>3</experiments>
</comment>
<comment type="interaction">
    <interactant intactId="EBI-2803601">
        <id>Q9NRZ7</id>
    </interactant>
    <interactant intactId="EBI-17684533">
        <id>Q9NRX6</id>
        <label>TMEM167B</label>
    </interactant>
    <organismsDiffer>false</organismsDiffer>
    <experiments>3</experiments>
</comment>
<comment type="interaction">
    <interactant intactId="EBI-2803601">
        <id>Q9NRZ7</id>
    </interactant>
    <interactant intactId="EBI-6447886">
        <id>Q9Y320</id>
        <label>TMX2</label>
    </interactant>
    <organismsDiffer>false</organismsDiffer>
    <experiments>3</experiments>
</comment>
<comment type="subcellular location">
    <subcellularLocation>
        <location evidence="3 4">Endoplasmic reticulum membrane</location>
        <topology evidence="2">Multi-pass membrane protein</topology>
    </subcellularLocation>
    <subcellularLocation>
        <location evidence="4">Nucleus envelope</location>
    </subcellularLocation>
</comment>
<comment type="alternative products">
    <event type="alternative splicing"/>
    <isoform>
        <id>Q9NRZ7-1</id>
        <name>1</name>
        <name>Gamma-1</name>
        <sequence type="displayed"/>
    </isoform>
    <isoform>
        <id>Q9NRZ7-2</id>
        <name>2</name>
        <name>Gamma-2</name>
        <sequence type="described" ref="VSP_005072"/>
    </isoform>
    <isoform>
        <id>Q9NRZ7-3</id>
        <name>3</name>
        <sequence type="described" ref="VSP_013144"/>
    </isoform>
</comment>
<comment type="tissue specificity">
    <text evidence="4">Widely expressed with highest levels in testis, pancreas and kidney, followed by spleen, lung, adipose tissue and liver.</text>
</comment>
<comment type="domain">
    <text evidence="1">The HXXXXD motif is essential for acyltransferase activity and may constitute the binding site for the phosphate moiety of the glycerol-3-phosphate.</text>
</comment>
<comment type="similarity">
    <text evidence="7">Belongs to the 1-acyl-sn-glycerol-3-phosphate acyltransferase family.</text>
</comment>
<sequence length="376" mass="43381">MGLLAFLKTQFVLHLLVGFVFVVSGLVINFVQLCTLALWPVSKQLYRRLNCRLAYSLWSQLVMLLEWWSCTECTLFTDQATVERFGKEHAVIILNHNFEIDFLCGWTMCERFGVLGSSKVLAKKELLYVPLIGWTWYFLEIVFCKRKWEEDRDTVVEGLRRLSDYPEYMWFLLYCEGTRFTETKHRVSMEVAAAKGLPVLKYHLLPRTKGFTTAVKCLRGTVAAVYDVTLNFRGNKNPSLLGILYGKKYEADMCVRRFPLEDIPLDEKEAAQWLHKLYQEKDALQEIYNQKGMFPGEQFKPARRPWTLLNFLSWATILLSPLFSFVLGVFASGSPLLILTFLGFVGAASFGVRRLIGVTEIEKGSSYGNQEFKKKE</sequence>
<name>PLCC_HUMAN</name>
<reference key="1">
    <citation type="journal article" date="2001" name="Front. Biosci.">
        <title>The structure and functions of human lysophosphatidic acid acyltransferases.</title>
        <authorList>
            <person name="Leung D.W."/>
        </authorList>
    </citation>
    <scope>NUCLEOTIDE SEQUENCE [MRNA] (ISOFORMS 1 AND 2)</scope>
</reference>
<reference key="2">
    <citation type="submission" date="2000-03" db="EMBL/GenBank/DDBJ databases">
        <title>Isolation of a novel gene encoding 1-acylglycerol-3-phosphate O-acyltransferase 3 (AGPAT3) from the human chromosome 21q22.3.</title>
        <authorList>
            <person name="Nagamine K."/>
            <person name="Kudoh J."/>
            <person name="Minoshima S."/>
            <person name="Kawasaki K."/>
            <person name="Hase T."/>
            <person name="Shimizu N."/>
        </authorList>
    </citation>
    <scope>NUCLEOTIDE SEQUENCE [MRNA] (ISOFORM 1)</scope>
    <source>
        <tissue>Fetal liver</tissue>
    </source>
</reference>
<reference key="3">
    <citation type="journal article" date="2003" name="Genome Res.">
        <title>The secreted protein discovery initiative (SPDI), a large-scale effort to identify novel human secreted and transmembrane proteins: a bioinformatics assessment.</title>
        <authorList>
            <person name="Clark H.F."/>
            <person name="Gurney A.L."/>
            <person name="Abaya E."/>
            <person name="Baker K."/>
            <person name="Baldwin D.T."/>
            <person name="Brush J."/>
            <person name="Chen J."/>
            <person name="Chow B."/>
            <person name="Chui C."/>
            <person name="Crowley C."/>
            <person name="Currell B."/>
            <person name="Deuel B."/>
            <person name="Dowd P."/>
            <person name="Eaton D."/>
            <person name="Foster J.S."/>
            <person name="Grimaldi C."/>
            <person name="Gu Q."/>
            <person name="Hass P.E."/>
            <person name="Heldens S."/>
            <person name="Huang A."/>
            <person name="Kim H.S."/>
            <person name="Klimowski L."/>
            <person name="Jin Y."/>
            <person name="Johnson S."/>
            <person name="Lee J."/>
            <person name="Lewis L."/>
            <person name="Liao D."/>
            <person name="Mark M.R."/>
            <person name="Robbie E."/>
            <person name="Sanchez C."/>
            <person name="Schoenfeld J."/>
            <person name="Seshagiri S."/>
            <person name="Simmons L."/>
            <person name="Singh J."/>
            <person name="Smith V."/>
            <person name="Stinson J."/>
            <person name="Vagts A."/>
            <person name="Vandlen R.L."/>
            <person name="Watanabe C."/>
            <person name="Wieand D."/>
            <person name="Woods K."/>
            <person name="Xie M.-H."/>
            <person name="Yansura D.G."/>
            <person name="Yi S."/>
            <person name="Yu G."/>
            <person name="Yuan J."/>
            <person name="Zhang M."/>
            <person name="Zhang Z."/>
            <person name="Goddard A.D."/>
            <person name="Wood W.I."/>
            <person name="Godowski P.J."/>
            <person name="Gray A.M."/>
        </authorList>
    </citation>
    <scope>NUCLEOTIDE SEQUENCE [LARGE SCALE MRNA] (ISOFORM 1)</scope>
</reference>
<reference key="4">
    <citation type="journal article" date="2000" name="Nature">
        <title>The DNA sequence of human chromosome 21.</title>
        <authorList>
            <person name="Hattori M."/>
            <person name="Fujiyama A."/>
            <person name="Taylor T.D."/>
            <person name="Watanabe H."/>
            <person name="Yada T."/>
            <person name="Park H.-S."/>
            <person name="Toyoda A."/>
            <person name="Ishii K."/>
            <person name="Totoki Y."/>
            <person name="Choi D.-K."/>
            <person name="Groner Y."/>
            <person name="Soeda E."/>
            <person name="Ohki M."/>
            <person name="Takagi T."/>
            <person name="Sakaki Y."/>
            <person name="Taudien S."/>
            <person name="Blechschmidt K."/>
            <person name="Polley A."/>
            <person name="Menzel U."/>
            <person name="Delabar J."/>
            <person name="Kumpf K."/>
            <person name="Lehmann R."/>
            <person name="Patterson D."/>
            <person name="Reichwald K."/>
            <person name="Rump A."/>
            <person name="Schillhabel M."/>
            <person name="Schudy A."/>
            <person name="Zimmermann W."/>
            <person name="Rosenthal A."/>
            <person name="Kudoh J."/>
            <person name="Shibuya K."/>
            <person name="Kawasaki K."/>
            <person name="Asakawa S."/>
            <person name="Shintani A."/>
            <person name="Sasaki T."/>
            <person name="Nagamine K."/>
            <person name="Mitsuyama S."/>
            <person name="Antonarakis S.E."/>
            <person name="Minoshima S."/>
            <person name="Shimizu N."/>
            <person name="Nordsiek G."/>
            <person name="Hornischer K."/>
            <person name="Brandt P."/>
            <person name="Scharfe M."/>
            <person name="Schoen O."/>
            <person name="Desario A."/>
            <person name="Reichelt J."/>
            <person name="Kauer G."/>
            <person name="Bloecker H."/>
            <person name="Ramser J."/>
            <person name="Beck A."/>
            <person name="Klages S."/>
            <person name="Hennig S."/>
            <person name="Riesselmann L."/>
            <person name="Dagand E."/>
            <person name="Wehrmeyer S."/>
            <person name="Borzym K."/>
            <person name="Gardiner K."/>
            <person name="Nizetic D."/>
            <person name="Francis F."/>
            <person name="Lehrach H."/>
            <person name="Reinhardt R."/>
            <person name="Yaspo M.-L."/>
        </authorList>
    </citation>
    <scope>NUCLEOTIDE SEQUENCE [LARGE SCALE GENOMIC DNA]</scope>
</reference>
<reference key="5">
    <citation type="submission" date="2005-09" db="EMBL/GenBank/DDBJ databases">
        <authorList>
            <person name="Mural R.J."/>
            <person name="Istrail S."/>
            <person name="Sutton G.G."/>
            <person name="Florea L."/>
            <person name="Halpern A.L."/>
            <person name="Mobarry C.M."/>
            <person name="Lippert R."/>
            <person name="Walenz B."/>
            <person name="Shatkay H."/>
            <person name="Dew I."/>
            <person name="Miller J.R."/>
            <person name="Flanigan M.J."/>
            <person name="Edwards N.J."/>
            <person name="Bolanos R."/>
            <person name="Fasulo D."/>
            <person name="Halldorsson B.V."/>
            <person name="Hannenhalli S."/>
            <person name="Turner R."/>
            <person name="Yooseph S."/>
            <person name="Lu F."/>
            <person name="Nusskern D.R."/>
            <person name="Shue B.C."/>
            <person name="Zheng X.H."/>
            <person name="Zhong F."/>
            <person name="Delcher A.L."/>
            <person name="Huson D.H."/>
            <person name="Kravitz S.A."/>
            <person name="Mouchard L."/>
            <person name="Reinert K."/>
            <person name="Remington K.A."/>
            <person name="Clark A.G."/>
            <person name="Waterman M.S."/>
            <person name="Eichler E.E."/>
            <person name="Adams M.D."/>
            <person name="Hunkapiller M.W."/>
            <person name="Myers E.W."/>
            <person name="Venter J.C."/>
        </authorList>
    </citation>
    <scope>NUCLEOTIDE SEQUENCE [LARGE SCALE GENOMIC DNA]</scope>
</reference>
<reference key="6">
    <citation type="journal article" date="2004" name="Genome Res.">
        <title>The status, quality, and expansion of the NIH full-length cDNA project: the Mammalian Gene Collection (MGC).</title>
        <authorList>
            <consortium name="The MGC Project Team"/>
        </authorList>
    </citation>
    <scope>NUCLEOTIDE SEQUENCE [LARGE SCALE MRNA] (ISOFORM 1)</scope>
    <source>
        <tissue>Brain</tissue>
        <tissue>Skin</tissue>
        <tissue>Testis</tissue>
    </source>
</reference>
<reference key="7">
    <citation type="journal article" date="2004" name="Nat. Genet.">
        <title>Complete sequencing and characterization of 21,243 full-length human cDNAs.</title>
        <authorList>
            <person name="Ota T."/>
            <person name="Suzuki Y."/>
            <person name="Nishikawa T."/>
            <person name="Otsuki T."/>
            <person name="Sugiyama T."/>
            <person name="Irie R."/>
            <person name="Wakamatsu A."/>
            <person name="Hayashi K."/>
            <person name="Sato H."/>
            <person name="Nagai K."/>
            <person name="Kimura K."/>
            <person name="Makita H."/>
            <person name="Sekine M."/>
            <person name="Obayashi M."/>
            <person name="Nishi T."/>
            <person name="Shibahara T."/>
            <person name="Tanaka T."/>
            <person name="Ishii S."/>
            <person name="Yamamoto J."/>
            <person name="Saito K."/>
            <person name="Kawai Y."/>
            <person name="Isono Y."/>
            <person name="Nakamura Y."/>
            <person name="Nagahari K."/>
            <person name="Murakami K."/>
            <person name="Yasuda T."/>
            <person name="Iwayanagi T."/>
            <person name="Wagatsuma M."/>
            <person name="Shiratori A."/>
            <person name="Sudo H."/>
            <person name="Hosoiri T."/>
            <person name="Kaku Y."/>
            <person name="Kodaira H."/>
            <person name="Kondo H."/>
            <person name="Sugawara M."/>
            <person name="Takahashi M."/>
            <person name="Kanda K."/>
            <person name="Yokoi T."/>
            <person name="Furuya T."/>
            <person name="Kikkawa E."/>
            <person name="Omura Y."/>
            <person name="Abe K."/>
            <person name="Kamihara K."/>
            <person name="Katsuta N."/>
            <person name="Sato K."/>
            <person name="Tanikawa M."/>
            <person name="Yamazaki M."/>
            <person name="Ninomiya K."/>
            <person name="Ishibashi T."/>
            <person name="Yamashita H."/>
            <person name="Murakawa K."/>
            <person name="Fujimori K."/>
            <person name="Tanai H."/>
            <person name="Kimata M."/>
            <person name="Watanabe M."/>
            <person name="Hiraoka S."/>
            <person name="Chiba Y."/>
            <person name="Ishida S."/>
            <person name="Ono Y."/>
            <person name="Takiguchi S."/>
            <person name="Watanabe S."/>
            <person name="Yosida M."/>
            <person name="Hotuta T."/>
            <person name="Kusano J."/>
            <person name="Kanehori K."/>
            <person name="Takahashi-Fujii A."/>
            <person name="Hara H."/>
            <person name="Tanase T.-O."/>
            <person name="Nomura Y."/>
            <person name="Togiya S."/>
            <person name="Komai F."/>
            <person name="Hara R."/>
            <person name="Takeuchi K."/>
            <person name="Arita M."/>
            <person name="Imose N."/>
            <person name="Musashino K."/>
            <person name="Yuuki H."/>
            <person name="Oshima A."/>
            <person name="Sasaki N."/>
            <person name="Aotsuka S."/>
            <person name="Yoshikawa Y."/>
            <person name="Matsunawa H."/>
            <person name="Ichihara T."/>
            <person name="Shiohata N."/>
            <person name="Sano S."/>
            <person name="Moriya S."/>
            <person name="Momiyama H."/>
            <person name="Satoh N."/>
            <person name="Takami S."/>
            <person name="Terashima Y."/>
            <person name="Suzuki O."/>
            <person name="Nakagawa S."/>
            <person name="Senoh A."/>
            <person name="Mizoguchi H."/>
            <person name="Goto Y."/>
            <person name="Shimizu F."/>
            <person name="Wakebe H."/>
            <person name="Hishigaki H."/>
            <person name="Watanabe T."/>
            <person name="Sugiyama A."/>
            <person name="Takemoto M."/>
            <person name="Kawakami B."/>
            <person name="Yamazaki M."/>
            <person name="Watanabe K."/>
            <person name="Kumagai A."/>
            <person name="Itakura S."/>
            <person name="Fukuzumi Y."/>
            <person name="Fujimori Y."/>
            <person name="Komiyama M."/>
            <person name="Tashiro H."/>
            <person name="Tanigami A."/>
            <person name="Fujiwara T."/>
            <person name="Ono T."/>
            <person name="Yamada K."/>
            <person name="Fujii Y."/>
            <person name="Ozaki K."/>
            <person name="Hirao M."/>
            <person name="Ohmori Y."/>
            <person name="Kawabata A."/>
            <person name="Hikiji T."/>
            <person name="Kobatake N."/>
            <person name="Inagaki H."/>
            <person name="Ikema Y."/>
            <person name="Okamoto S."/>
            <person name="Okitani R."/>
            <person name="Kawakami T."/>
            <person name="Noguchi S."/>
            <person name="Itoh T."/>
            <person name="Shigeta K."/>
            <person name="Senba T."/>
            <person name="Matsumura K."/>
            <person name="Nakajima Y."/>
            <person name="Mizuno T."/>
            <person name="Morinaga M."/>
            <person name="Sasaki M."/>
            <person name="Togashi T."/>
            <person name="Oyama M."/>
            <person name="Hata H."/>
            <person name="Watanabe M."/>
            <person name="Komatsu T."/>
            <person name="Mizushima-Sugano J."/>
            <person name="Satoh T."/>
            <person name="Shirai Y."/>
            <person name="Takahashi Y."/>
            <person name="Nakagawa K."/>
            <person name="Okumura K."/>
            <person name="Nagase T."/>
            <person name="Nomura N."/>
            <person name="Kikuchi H."/>
            <person name="Masuho Y."/>
            <person name="Yamashita R."/>
            <person name="Nakai K."/>
            <person name="Yada T."/>
            <person name="Nakamura Y."/>
            <person name="Ohara O."/>
            <person name="Isogai T."/>
            <person name="Sugano S."/>
        </authorList>
    </citation>
    <scope>NUCLEOTIDE SEQUENCE [LARGE SCALE MRNA] OF 1-372 (ISOFORM 3)</scope>
</reference>
<reference key="8">
    <citation type="journal article" date="2007" name="BMC Genomics">
        <title>The full-ORF clone resource of the German cDNA consortium.</title>
        <authorList>
            <person name="Bechtel S."/>
            <person name="Rosenfelder H."/>
            <person name="Duda A."/>
            <person name="Schmidt C.P."/>
            <person name="Ernst U."/>
            <person name="Wellenreuther R."/>
            <person name="Mehrle A."/>
            <person name="Schuster C."/>
            <person name="Bahr A."/>
            <person name="Bloecker H."/>
            <person name="Heubner D."/>
            <person name="Hoerlein A."/>
            <person name="Michel G."/>
            <person name="Wedler H."/>
            <person name="Koehrer K."/>
            <person name="Ottenwaelder B."/>
            <person name="Poustka A."/>
            <person name="Wiemann S."/>
            <person name="Schupp I."/>
        </authorList>
    </citation>
    <scope>NUCLEOTIDE SEQUENCE [LARGE SCALE MRNA] OF 70-376</scope>
    <source>
        <tissue>Melanoma</tissue>
    </source>
</reference>
<reference key="9">
    <citation type="journal article" date="2010" name="Biochem. Biophys. Res. Commun.">
        <title>Membrane topology of human AGPAT3 (LPAAT3).</title>
        <authorList>
            <person name="Schmidt J.A."/>
            <person name="Yvone G.M."/>
            <person name="Brown W.J."/>
        </authorList>
    </citation>
    <scope>SUBCELLULAR LOCATION</scope>
    <scope>MEMBRANE TOPOLOGY</scope>
</reference>
<reference key="10">
    <citation type="journal article" date="2011" name="J. Lipid Res.">
        <title>Enzymatic activities of the human AGPAT isoform 3 and isoform 5: localization of AGPAT5 to mitochondria.</title>
        <authorList>
            <person name="Prasad S.S."/>
            <person name="Garg A."/>
            <person name="Agarwal A.K."/>
        </authorList>
    </citation>
    <scope>FUNCTION</scope>
    <scope>CATALYTIC ACTIVITY</scope>
    <scope>BIOPHYSICOCHEMICAL PROPERTIES</scope>
    <scope>SUBCELLULAR LOCATION</scope>
    <scope>TISSUE SPECIFICITY</scope>
</reference>
<dbReference type="EC" id="2.3.1.51" evidence="4"/>
<dbReference type="EMBL" id="AF156774">
    <property type="protein sequence ID" value="AAF80336.1"/>
    <property type="molecule type" value="mRNA"/>
</dbReference>
<dbReference type="EMBL" id="AF156775">
    <property type="protein sequence ID" value="AAF80337.1"/>
    <property type="molecule type" value="mRNA"/>
</dbReference>
<dbReference type="EMBL" id="AB040138">
    <property type="protein sequence ID" value="BAB18943.1"/>
    <property type="molecule type" value="mRNA"/>
</dbReference>
<dbReference type="EMBL" id="AY358704">
    <property type="protein sequence ID" value="AAQ89067.1"/>
    <property type="molecule type" value="mRNA"/>
</dbReference>
<dbReference type="EMBL" id="AP001054">
    <property type="status" value="NOT_ANNOTATED_CDS"/>
    <property type="molecule type" value="Genomic_DNA"/>
</dbReference>
<dbReference type="EMBL" id="CH471079">
    <property type="protein sequence ID" value="EAX09461.1"/>
    <property type="molecule type" value="Genomic_DNA"/>
</dbReference>
<dbReference type="EMBL" id="CH471079">
    <property type="protein sequence ID" value="EAX09463.1"/>
    <property type="molecule type" value="Genomic_DNA"/>
</dbReference>
<dbReference type="EMBL" id="CH471079">
    <property type="protein sequence ID" value="EAX09464.1"/>
    <property type="molecule type" value="Genomic_DNA"/>
</dbReference>
<dbReference type="EMBL" id="CH471079">
    <property type="protein sequence ID" value="EAX09465.1"/>
    <property type="molecule type" value="Genomic_DNA"/>
</dbReference>
<dbReference type="EMBL" id="BC011971">
    <property type="protein sequence ID" value="AAH11971.1"/>
    <property type="molecule type" value="mRNA"/>
</dbReference>
<dbReference type="EMBL" id="BC040603">
    <property type="protein sequence ID" value="AAH40603.1"/>
    <property type="molecule type" value="mRNA"/>
</dbReference>
<dbReference type="EMBL" id="BC063552">
    <property type="protein sequence ID" value="AAH63552.1"/>
    <property type="molecule type" value="mRNA"/>
</dbReference>
<dbReference type="EMBL" id="AK125804">
    <property type="protein sequence ID" value="BAC86299.1"/>
    <property type="molecule type" value="mRNA"/>
</dbReference>
<dbReference type="EMBL" id="AL832919">
    <property type="protein sequence ID" value="CAD38635.2"/>
    <property type="molecule type" value="mRNA"/>
</dbReference>
<dbReference type="CCDS" id="CCDS13703.1">
    <molecule id="Q9NRZ7-1"/>
</dbReference>
<dbReference type="RefSeq" id="NP_001032642.1">
    <molecule id="Q9NRZ7-1"/>
    <property type="nucleotide sequence ID" value="NM_001037553.2"/>
</dbReference>
<dbReference type="RefSeq" id="NP_001356807.1">
    <molecule id="Q9NRZ7-1"/>
    <property type="nucleotide sequence ID" value="NM_001369878.1"/>
</dbReference>
<dbReference type="RefSeq" id="NP_001356809.1">
    <molecule id="Q9NRZ7-1"/>
    <property type="nucleotide sequence ID" value="NM_001369880.1"/>
</dbReference>
<dbReference type="RefSeq" id="NP_001356810.1">
    <molecule id="Q9NRZ7-2"/>
    <property type="nucleotide sequence ID" value="NM_001369881.1"/>
</dbReference>
<dbReference type="RefSeq" id="NP_064517.1">
    <molecule id="Q9NRZ7-1"/>
    <property type="nucleotide sequence ID" value="NM_020132.5"/>
</dbReference>
<dbReference type="RefSeq" id="XP_005261217.1">
    <molecule id="Q9NRZ7-1"/>
    <property type="nucleotide sequence ID" value="XM_005261160.5"/>
</dbReference>
<dbReference type="RefSeq" id="XP_006724092.1">
    <property type="nucleotide sequence ID" value="XM_006724029.3"/>
</dbReference>
<dbReference type="RefSeq" id="XP_006724093.1">
    <molecule id="Q9NRZ7-1"/>
    <property type="nucleotide sequence ID" value="XM_006724030.4"/>
</dbReference>
<dbReference type="RefSeq" id="XP_006724094.1">
    <molecule id="Q9NRZ7-2"/>
    <property type="nucleotide sequence ID" value="XM_006724031.4"/>
</dbReference>
<dbReference type="RefSeq" id="XP_011527963.2">
    <molecule id="Q9NRZ7-2"/>
    <property type="nucleotide sequence ID" value="XM_011529661.3"/>
</dbReference>
<dbReference type="RefSeq" id="XP_011527965.2">
    <molecule id="Q9NRZ7-2"/>
    <property type="nucleotide sequence ID" value="XM_011529663.3"/>
</dbReference>
<dbReference type="RefSeq" id="XP_011527967.1">
    <property type="nucleotide sequence ID" value="XM_011529665.2"/>
</dbReference>
<dbReference type="RefSeq" id="XP_016883898.1">
    <property type="nucleotide sequence ID" value="XM_017028409.1"/>
</dbReference>
<dbReference type="RefSeq" id="XP_016883899.1">
    <property type="nucleotide sequence ID" value="XM_017028410.1"/>
</dbReference>
<dbReference type="RefSeq" id="XP_016883900.1">
    <molecule id="Q9NRZ7-2"/>
    <property type="nucleotide sequence ID" value="XM_017028411.2"/>
</dbReference>
<dbReference type="RefSeq" id="XP_016883901.1">
    <property type="nucleotide sequence ID" value="XM_017028412.1"/>
</dbReference>
<dbReference type="RefSeq" id="XP_016883902.1">
    <property type="nucleotide sequence ID" value="XM_017028413.1"/>
</dbReference>
<dbReference type="RefSeq" id="XP_047296870.1">
    <molecule id="Q9NRZ7-1"/>
    <property type="nucleotide sequence ID" value="XM_047440914.1"/>
</dbReference>
<dbReference type="RefSeq" id="XP_047296875.1">
    <molecule id="Q9NRZ7-1"/>
    <property type="nucleotide sequence ID" value="XM_047440919.1"/>
</dbReference>
<dbReference type="RefSeq" id="XP_047296879.1">
    <molecule id="Q9NRZ7-1"/>
    <property type="nucleotide sequence ID" value="XM_047440923.1"/>
</dbReference>
<dbReference type="RefSeq" id="XP_047296880.1">
    <molecule id="Q9NRZ7-1"/>
    <property type="nucleotide sequence ID" value="XM_047440924.1"/>
</dbReference>
<dbReference type="RefSeq" id="XP_047296881.1">
    <molecule id="Q9NRZ7-1"/>
    <property type="nucleotide sequence ID" value="XM_047440925.1"/>
</dbReference>
<dbReference type="RefSeq" id="XP_047296882.1">
    <molecule id="Q9NRZ7-1"/>
    <property type="nucleotide sequence ID" value="XM_047440926.1"/>
</dbReference>
<dbReference type="RefSeq" id="XP_047296883.1">
    <molecule id="Q9NRZ7-1"/>
    <property type="nucleotide sequence ID" value="XM_047440927.1"/>
</dbReference>
<dbReference type="RefSeq" id="XP_047296884.1">
    <molecule id="Q9NRZ7-1"/>
    <property type="nucleotide sequence ID" value="XM_047440928.1"/>
</dbReference>
<dbReference type="RefSeq" id="XP_047296885.1">
    <molecule id="Q9NRZ7-2"/>
    <property type="nucleotide sequence ID" value="XM_047440929.1"/>
</dbReference>
<dbReference type="RefSeq" id="XP_054180681.1">
    <molecule id="Q9NRZ7-2"/>
    <property type="nucleotide sequence ID" value="XM_054324706.1"/>
</dbReference>
<dbReference type="RefSeq" id="XP_054180682.1">
    <molecule id="Q9NRZ7-2"/>
    <property type="nucleotide sequence ID" value="XM_054324707.1"/>
</dbReference>
<dbReference type="RefSeq" id="XP_054180686.1">
    <molecule id="Q9NRZ7-1"/>
    <property type="nucleotide sequence ID" value="XM_054324711.1"/>
</dbReference>
<dbReference type="RefSeq" id="XP_054180687.1">
    <molecule id="Q9NRZ7-1"/>
    <property type="nucleotide sequence ID" value="XM_054324712.1"/>
</dbReference>
<dbReference type="RefSeq" id="XP_054180688.1">
    <molecule id="Q9NRZ7-1"/>
    <property type="nucleotide sequence ID" value="XM_054324713.1"/>
</dbReference>
<dbReference type="RefSeq" id="XP_054180689.1">
    <molecule id="Q9NRZ7-1"/>
    <property type="nucleotide sequence ID" value="XM_054324714.1"/>
</dbReference>
<dbReference type="RefSeq" id="XP_054180690.1">
    <molecule id="Q9NRZ7-1"/>
    <property type="nucleotide sequence ID" value="XM_054324715.1"/>
</dbReference>
<dbReference type="RefSeq" id="XP_054180691.1">
    <molecule id="Q9NRZ7-2"/>
    <property type="nucleotide sequence ID" value="XM_054324716.1"/>
</dbReference>
<dbReference type="RefSeq" id="XP_054180692.1">
    <molecule id="Q9NRZ7-2"/>
    <property type="nucleotide sequence ID" value="XM_054324717.1"/>
</dbReference>
<dbReference type="RefSeq" id="XP_054180693.1">
    <molecule id="Q9NRZ7-1"/>
    <property type="nucleotide sequence ID" value="XM_054324718.1"/>
</dbReference>
<dbReference type="SMR" id="Q9NRZ7"/>
<dbReference type="BioGRID" id="121224">
    <property type="interactions" value="99"/>
</dbReference>
<dbReference type="FunCoup" id="Q9NRZ7">
    <property type="interactions" value="1724"/>
</dbReference>
<dbReference type="IntAct" id="Q9NRZ7">
    <property type="interactions" value="69"/>
</dbReference>
<dbReference type="MINT" id="Q9NRZ7"/>
<dbReference type="STRING" id="9606.ENSP00000291572"/>
<dbReference type="SwissLipids" id="SLP:000000823"/>
<dbReference type="TCDB" id="9.B.447.1.1">
    <property type="family name" value="the 1-acyl-sn-glycerol-3-phosphate acyltransferase gamma (agpat3) family"/>
</dbReference>
<dbReference type="iPTMnet" id="Q9NRZ7"/>
<dbReference type="PhosphoSitePlus" id="Q9NRZ7"/>
<dbReference type="SwissPalm" id="Q9NRZ7"/>
<dbReference type="BioMuta" id="AGPAT3"/>
<dbReference type="DMDM" id="12643817"/>
<dbReference type="jPOST" id="Q9NRZ7"/>
<dbReference type="MassIVE" id="Q9NRZ7"/>
<dbReference type="PaxDb" id="9606-ENSP00000381140"/>
<dbReference type="PeptideAtlas" id="Q9NRZ7"/>
<dbReference type="ProteomicsDB" id="82447">
    <molecule id="Q9NRZ7-1"/>
</dbReference>
<dbReference type="ProteomicsDB" id="82448">
    <molecule id="Q9NRZ7-2"/>
</dbReference>
<dbReference type="ProteomicsDB" id="82449">
    <molecule id="Q9NRZ7-3"/>
</dbReference>
<dbReference type="Pumba" id="Q9NRZ7"/>
<dbReference type="Antibodypedia" id="24081">
    <property type="antibodies" value="164 antibodies from 26 providers"/>
</dbReference>
<dbReference type="DNASU" id="56894"/>
<dbReference type="Ensembl" id="ENST00000291572.13">
    <molecule id="Q9NRZ7-1"/>
    <property type="protein sequence ID" value="ENSP00000291572.8"/>
    <property type="gene ID" value="ENSG00000160216.21"/>
</dbReference>
<dbReference type="Ensembl" id="ENST00000327505.6">
    <molecule id="Q9NRZ7-1"/>
    <property type="protein sequence ID" value="ENSP00000332989.2"/>
    <property type="gene ID" value="ENSG00000160216.21"/>
</dbReference>
<dbReference type="Ensembl" id="ENST00000398058.5">
    <molecule id="Q9NRZ7-1"/>
    <property type="protein sequence ID" value="ENSP00000381135.1"/>
    <property type="gene ID" value="ENSG00000160216.21"/>
</dbReference>
<dbReference type="Ensembl" id="ENST00000398061.5">
    <molecule id="Q9NRZ7-1"/>
    <property type="protein sequence ID" value="ENSP00000381138.1"/>
    <property type="gene ID" value="ENSG00000160216.21"/>
</dbReference>
<dbReference type="Ensembl" id="ENST00000398063.6">
    <molecule id="Q9NRZ7-1"/>
    <property type="protein sequence ID" value="ENSP00000381140.2"/>
    <property type="gene ID" value="ENSG00000160216.21"/>
</dbReference>
<dbReference type="Ensembl" id="ENST00000546158.1">
    <molecule id="Q9NRZ7-1"/>
    <property type="protein sequence ID" value="ENSP00000443510.1"/>
    <property type="gene ID" value="ENSG00000160216.21"/>
</dbReference>
<dbReference type="GeneID" id="56894"/>
<dbReference type="KEGG" id="hsa:56894"/>
<dbReference type="MANE-Select" id="ENST00000291572.13">
    <property type="protein sequence ID" value="ENSP00000291572.8"/>
    <property type="RefSeq nucleotide sequence ID" value="NM_020132.5"/>
    <property type="RefSeq protein sequence ID" value="NP_064517.1"/>
</dbReference>
<dbReference type="UCSC" id="uc002zdv.4">
    <molecule id="Q9NRZ7-1"/>
    <property type="organism name" value="human"/>
</dbReference>
<dbReference type="AGR" id="HGNC:326"/>
<dbReference type="CTD" id="56894"/>
<dbReference type="DisGeNET" id="56894"/>
<dbReference type="GeneCards" id="AGPAT3"/>
<dbReference type="HGNC" id="HGNC:326">
    <property type="gene designation" value="AGPAT3"/>
</dbReference>
<dbReference type="HPA" id="ENSG00000160216">
    <property type="expression patterns" value="Low tissue specificity"/>
</dbReference>
<dbReference type="MIM" id="614794">
    <property type="type" value="gene"/>
</dbReference>
<dbReference type="neXtProt" id="NX_Q9NRZ7"/>
<dbReference type="OpenTargets" id="ENSG00000160216"/>
<dbReference type="PharmGKB" id="PA24623"/>
<dbReference type="VEuPathDB" id="HostDB:ENSG00000160216"/>
<dbReference type="eggNOG" id="KOG1505">
    <property type="taxonomic scope" value="Eukaryota"/>
</dbReference>
<dbReference type="GeneTree" id="ENSGT00950000182836"/>
<dbReference type="InParanoid" id="Q9NRZ7"/>
<dbReference type="OMA" id="RMVMIAN"/>
<dbReference type="OrthoDB" id="189226at2759"/>
<dbReference type="PAN-GO" id="Q9NRZ7">
    <property type="GO annotations" value="3 GO annotations based on evolutionary models"/>
</dbReference>
<dbReference type="PhylomeDB" id="Q9NRZ7"/>
<dbReference type="TreeFam" id="TF314065"/>
<dbReference type="BioCyc" id="MetaCyc:HS08470-MONOMER"/>
<dbReference type="BRENDA" id="2.3.1.51">
    <property type="organism ID" value="2681"/>
</dbReference>
<dbReference type="PathwayCommons" id="Q9NRZ7"/>
<dbReference type="Reactome" id="R-HSA-1483166">
    <property type="pathway name" value="Synthesis of PA"/>
</dbReference>
<dbReference type="Reactome" id="R-HSA-6811436">
    <property type="pathway name" value="COPI-independent Golgi-to-ER retrograde traffic"/>
</dbReference>
<dbReference type="SABIO-RK" id="Q9NRZ7"/>
<dbReference type="SignaLink" id="Q9NRZ7"/>
<dbReference type="SIGNOR" id="Q9NRZ7"/>
<dbReference type="UniPathway" id="UPA00557">
    <property type="reaction ID" value="UER00613"/>
</dbReference>
<dbReference type="BioGRID-ORCS" id="56894">
    <property type="hits" value="17 hits in 1161 CRISPR screens"/>
</dbReference>
<dbReference type="ChiTaRS" id="AGPAT3">
    <property type="organism name" value="human"/>
</dbReference>
<dbReference type="GeneWiki" id="AGPAT3"/>
<dbReference type="GenomeRNAi" id="56894"/>
<dbReference type="Pharos" id="Q9NRZ7">
    <property type="development level" value="Tbio"/>
</dbReference>
<dbReference type="PRO" id="PR:Q9NRZ7"/>
<dbReference type="Proteomes" id="UP000005640">
    <property type="component" value="Chromosome 21"/>
</dbReference>
<dbReference type="RNAct" id="Q9NRZ7">
    <property type="molecule type" value="protein"/>
</dbReference>
<dbReference type="Bgee" id="ENSG00000160216">
    <property type="expression patterns" value="Expressed in lateral globus pallidus and 183 other cell types or tissues"/>
</dbReference>
<dbReference type="ExpressionAtlas" id="Q9NRZ7">
    <property type="expression patterns" value="baseline and differential"/>
</dbReference>
<dbReference type="GO" id="GO:0012505">
    <property type="term" value="C:endomembrane system"/>
    <property type="evidence" value="ECO:0000318"/>
    <property type="project" value="GO_Central"/>
</dbReference>
<dbReference type="GO" id="GO:0005783">
    <property type="term" value="C:endoplasmic reticulum"/>
    <property type="evidence" value="ECO:0007005"/>
    <property type="project" value="UniProtKB"/>
</dbReference>
<dbReference type="GO" id="GO:0005789">
    <property type="term" value="C:endoplasmic reticulum membrane"/>
    <property type="evidence" value="ECO:0000314"/>
    <property type="project" value="UniProtKB"/>
</dbReference>
<dbReference type="GO" id="GO:0000139">
    <property type="term" value="C:Golgi membrane"/>
    <property type="evidence" value="ECO:0000304"/>
    <property type="project" value="Reactome"/>
</dbReference>
<dbReference type="GO" id="GO:0016020">
    <property type="term" value="C:membrane"/>
    <property type="evidence" value="ECO:0007005"/>
    <property type="project" value="UniProtKB"/>
</dbReference>
<dbReference type="GO" id="GO:0005635">
    <property type="term" value="C:nuclear envelope"/>
    <property type="evidence" value="ECO:0000314"/>
    <property type="project" value="UniProtKB"/>
</dbReference>
<dbReference type="GO" id="GO:0005886">
    <property type="term" value="C:plasma membrane"/>
    <property type="evidence" value="ECO:0007005"/>
    <property type="project" value="UniProtKB"/>
</dbReference>
<dbReference type="GO" id="GO:0003841">
    <property type="term" value="F:1-acylglycerol-3-phosphate O-acyltransferase activity"/>
    <property type="evidence" value="ECO:0000314"/>
    <property type="project" value="UniProtKB"/>
</dbReference>
<dbReference type="GO" id="GO:0016024">
    <property type="term" value="P:CDP-diacylglycerol biosynthetic process"/>
    <property type="evidence" value="ECO:0007669"/>
    <property type="project" value="UniProtKB-UniPathway"/>
</dbReference>
<dbReference type="GO" id="GO:0006654">
    <property type="term" value="P:phosphatidic acid biosynthetic process"/>
    <property type="evidence" value="ECO:0000304"/>
    <property type="project" value="Reactome"/>
</dbReference>
<dbReference type="GO" id="GO:0008654">
    <property type="term" value="P:phospholipid biosynthetic process"/>
    <property type="evidence" value="ECO:0000303"/>
    <property type="project" value="UniProtKB"/>
</dbReference>
<dbReference type="CDD" id="cd07990">
    <property type="entry name" value="LPLAT_LCLAT1-like"/>
    <property type="match status" value="1"/>
</dbReference>
<dbReference type="InterPro" id="IPR032098">
    <property type="entry name" value="Acyltransf_C"/>
</dbReference>
<dbReference type="InterPro" id="IPR002123">
    <property type="entry name" value="Plipid/glycerol_acylTrfase"/>
</dbReference>
<dbReference type="PANTHER" id="PTHR10983:SF9">
    <property type="entry name" value="1-ACYL-SN-GLYCEROL-3-PHOSPHATE ACYLTRANSFERASE GAMMA"/>
    <property type="match status" value="1"/>
</dbReference>
<dbReference type="PANTHER" id="PTHR10983">
    <property type="entry name" value="1-ACYLGLYCEROL-3-PHOSPHATE ACYLTRANSFERASE-RELATED"/>
    <property type="match status" value="1"/>
</dbReference>
<dbReference type="Pfam" id="PF16076">
    <property type="entry name" value="Acyltransf_C"/>
    <property type="match status" value="1"/>
</dbReference>
<dbReference type="Pfam" id="PF01553">
    <property type="entry name" value="Acyltransferase"/>
    <property type="match status" value="1"/>
</dbReference>
<dbReference type="SMART" id="SM00563">
    <property type="entry name" value="PlsC"/>
    <property type="match status" value="1"/>
</dbReference>
<dbReference type="SUPFAM" id="SSF69593">
    <property type="entry name" value="Glycerol-3-phosphate (1)-acyltransferase"/>
    <property type="match status" value="1"/>
</dbReference>
<evidence type="ECO:0000250" key="1">
    <source>
        <dbReference type="UniProtKB" id="Q9D517"/>
    </source>
</evidence>
<evidence type="ECO:0000255" key="2"/>
<evidence type="ECO:0000269" key="3">
    <source>
    </source>
</evidence>
<evidence type="ECO:0000269" key="4">
    <source>
    </source>
</evidence>
<evidence type="ECO:0000303" key="5">
    <source>
    </source>
</evidence>
<evidence type="ECO:0000303" key="6">
    <source>
    </source>
</evidence>
<evidence type="ECO:0000305" key="7"/>
<evidence type="ECO:0000305" key="8">
    <source>
    </source>
</evidence>
<evidence type="ECO:0000305" key="9">
    <source>
    </source>
</evidence>